<sequence>MAAMTYHLDVVSAEKKMFSGVVQKIQVTGSEGELGIFPGHAPLLTAIKPGMIRIVKQFGEEEFIYLSGGILEVQPSVVIVLADTAIRGLDLDEARALESKRKAEAHINNSHGDVDYAQASAELAKAIAKLRVIELTKKAM</sequence>
<accession>B1JRN3</accession>
<gene>
    <name evidence="1" type="primary">atpC</name>
    <name type="ordered locus">YPK_4227</name>
</gene>
<reference key="1">
    <citation type="submission" date="2008-02" db="EMBL/GenBank/DDBJ databases">
        <title>Complete sequence of Yersinia pseudotuberculosis YPIII.</title>
        <authorList>
            <consortium name="US DOE Joint Genome Institute"/>
            <person name="Copeland A."/>
            <person name="Lucas S."/>
            <person name="Lapidus A."/>
            <person name="Glavina del Rio T."/>
            <person name="Dalin E."/>
            <person name="Tice H."/>
            <person name="Bruce D."/>
            <person name="Goodwin L."/>
            <person name="Pitluck S."/>
            <person name="Munk A.C."/>
            <person name="Brettin T."/>
            <person name="Detter J.C."/>
            <person name="Han C."/>
            <person name="Tapia R."/>
            <person name="Schmutz J."/>
            <person name="Larimer F."/>
            <person name="Land M."/>
            <person name="Hauser L."/>
            <person name="Challacombe J.F."/>
            <person name="Green L."/>
            <person name="Lindler L.E."/>
            <person name="Nikolich M.P."/>
            <person name="Richardson P."/>
        </authorList>
    </citation>
    <scope>NUCLEOTIDE SEQUENCE [LARGE SCALE GENOMIC DNA]</scope>
    <source>
        <strain>YPIII</strain>
    </source>
</reference>
<organism>
    <name type="scientific">Yersinia pseudotuberculosis serotype O:3 (strain YPIII)</name>
    <dbReference type="NCBI Taxonomy" id="502800"/>
    <lineage>
        <taxon>Bacteria</taxon>
        <taxon>Pseudomonadati</taxon>
        <taxon>Pseudomonadota</taxon>
        <taxon>Gammaproteobacteria</taxon>
        <taxon>Enterobacterales</taxon>
        <taxon>Yersiniaceae</taxon>
        <taxon>Yersinia</taxon>
    </lineage>
</organism>
<dbReference type="EMBL" id="CP000950">
    <property type="protein sequence ID" value="ACA70483.1"/>
    <property type="molecule type" value="Genomic_DNA"/>
</dbReference>
<dbReference type="RefSeq" id="WP_002215546.1">
    <property type="nucleotide sequence ID" value="NZ_CP009792.1"/>
</dbReference>
<dbReference type="SMR" id="B1JRN3"/>
<dbReference type="KEGG" id="ypy:YPK_4227"/>
<dbReference type="PATRIC" id="fig|502800.11.peg.577"/>
<dbReference type="GO" id="GO:0005886">
    <property type="term" value="C:plasma membrane"/>
    <property type="evidence" value="ECO:0007669"/>
    <property type="project" value="UniProtKB-SubCell"/>
</dbReference>
<dbReference type="GO" id="GO:0045259">
    <property type="term" value="C:proton-transporting ATP synthase complex"/>
    <property type="evidence" value="ECO:0007669"/>
    <property type="project" value="UniProtKB-KW"/>
</dbReference>
<dbReference type="GO" id="GO:0005524">
    <property type="term" value="F:ATP binding"/>
    <property type="evidence" value="ECO:0007669"/>
    <property type="project" value="UniProtKB-UniRule"/>
</dbReference>
<dbReference type="GO" id="GO:0046933">
    <property type="term" value="F:proton-transporting ATP synthase activity, rotational mechanism"/>
    <property type="evidence" value="ECO:0007669"/>
    <property type="project" value="UniProtKB-UniRule"/>
</dbReference>
<dbReference type="CDD" id="cd12152">
    <property type="entry name" value="F1-ATPase_delta"/>
    <property type="match status" value="1"/>
</dbReference>
<dbReference type="FunFam" id="1.20.5.440:FF:000001">
    <property type="entry name" value="ATP synthase epsilon chain"/>
    <property type="match status" value="1"/>
</dbReference>
<dbReference type="FunFam" id="2.60.15.10:FF:000001">
    <property type="entry name" value="ATP synthase epsilon chain"/>
    <property type="match status" value="1"/>
</dbReference>
<dbReference type="Gene3D" id="1.20.5.440">
    <property type="entry name" value="ATP synthase delta/epsilon subunit, C-terminal domain"/>
    <property type="match status" value="1"/>
</dbReference>
<dbReference type="Gene3D" id="2.60.15.10">
    <property type="entry name" value="F0F1 ATP synthase delta/epsilon subunit, N-terminal"/>
    <property type="match status" value="1"/>
</dbReference>
<dbReference type="HAMAP" id="MF_00530">
    <property type="entry name" value="ATP_synth_epsil_bac"/>
    <property type="match status" value="1"/>
</dbReference>
<dbReference type="InterPro" id="IPR036794">
    <property type="entry name" value="ATP_F1_dsu/esu_C_sf"/>
</dbReference>
<dbReference type="InterPro" id="IPR001469">
    <property type="entry name" value="ATP_synth_F1_dsu/esu"/>
</dbReference>
<dbReference type="InterPro" id="IPR020546">
    <property type="entry name" value="ATP_synth_F1_dsu/esu_N"/>
</dbReference>
<dbReference type="InterPro" id="IPR020547">
    <property type="entry name" value="ATP_synth_F1_esu_C"/>
</dbReference>
<dbReference type="InterPro" id="IPR036771">
    <property type="entry name" value="ATPsynth_dsu/esu_N"/>
</dbReference>
<dbReference type="NCBIfam" id="TIGR01216">
    <property type="entry name" value="ATP_synt_epsi"/>
    <property type="match status" value="1"/>
</dbReference>
<dbReference type="NCBIfam" id="NF001847">
    <property type="entry name" value="PRK00571.1-4"/>
    <property type="match status" value="1"/>
</dbReference>
<dbReference type="PANTHER" id="PTHR13822">
    <property type="entry name" value="ATP SYNTHASE DELTA/EPSILON CHAIN"/>
    <property type="match status" value="1"/>
</dbReference>
<dbReference type="PANTHER" id="PTHR13822:SF10">
    <property type="entry name" value="ATP SYNTHASE EPSILON CHAIN, CHLOROPLASTIC"/>
    <property type="match status" value="1"/>
</dbReference>
<dbReference type="Pfam" id="PF00401">
    <property type="entry name" value="ATP-synt_DE"/>
    <property type="match status" value="1"/>
</dbReference>
<dbReference type="Pfam" id="PF02823">
    <property type="entry name" value="ATP-synt_DE_N"/>
    <property type="match status" value="1"/>
</dbReference>
<dbReference type="SUPFAM" id="SSF46604">
    <property type="entry name" value="Epsilon subunit of F1F0-ATP synthase C-terminal domain"/>
    <property type="match status" value="1"/>
</dbReference>
<dbReference type="SUPFAM" id="SSF51344">
    <property type="entry name" value="Epsilon subunit of F1F0-ATP synthase N-terminal domain"/>
    <property type="match status" value="1"/>
</dbReference>
<feature type="chain" id="PRO_1000127911" description="ATP synthase epsilon chain">
    <location>
        <begin position="1"/>
        <end position="140"/>
    </location>
</feature>
<protein>
    <recommendedName>
        <fullName evidence="1">ATP synthase epsilon chain</fullName>
    </recommendedName>
    <alternativeName>
        <fullName evidence="1">ATP synthase F1 sector epsilon subunit</fullName>
    </alternativeName>
    <alternativeName>
        <fullName evidence="1">F-ATPase epsilon subunit</fullName>
    </alternativeName>
</protein>
<evidence type="ECO:0000255" key="1">
    <source>
        <dbReference type="HAMAP-Rule" id="MF_00530"/>
    </source>
</evidence>
<keyword id="KW-0066">ATP synthesis</keyword>
<keyword id="KW-0997">Cell inner membrane</keyword>
<keyword id="KW-1003">Cell membrane</keyword>
<keyword id="KW-0139">CF(1)</keyword>
<keyword id="KW-0375">Hydrogen ion transport</keyword>
<keyword id="KW-0406">Ion transport</keyword>
<keyword id="KW-0472">Membrane</keyword>
<keyword id="KW-0813">Transport</keyword>
<proteinExistence type="inferred from homology"/>
<name>ATPE_YERPY</name>
<comment type="function">
    <text evidence="1">Produces ATP from ADP in the presence of a proton gradient across the membrane.</text>
</comment>
<comment type="subunit">
    <text evidence="1">F-type ATPases have 2 components, CF(1) - the catalytic core - and CF(0) - the membrane proton channel. CF(1) has five subunits: alpha(3), beta(3), gamma(1), delta(1), epsilon(1). CF(0) has three main subunits: a, b and c.</text>
</comment>
<comment type="subcellular location">
    <subcellularLocation>
        <location evidence="1">Cell inner membrane</location>
        <topology evidence="1">Peripheral membrane protein</topology>
    </subcellularLocation>
</comment>
<comment type="similarity">
    <text evidence="1">Belongs to the ATPase epsilon chain family.</text>
</comment>